<dbReference type="EC" id="1.1.1.330" evidence="4"/>
<dbReference type="EMBL" id="CR382127">
    <property type="protein sequence ID" value="CAG83746.1"/>
    <property type="molecule type" value="Genomic_DNA"/>
</dbReference>
<dbReference type="RefSeq" id="XP_499820.1">
    <property type="nucleotide sequence ID" value="XM_499820.1"/>
</dbReference>
<dbReference type="SMR" id="Q6CHP1"/>
<dbReference type="FunCoup" id="Q6CHP1">
    <property type="interactions" value="779"/>
</dbReference>
<dbReference type="STRING" id="284591.Q6CHP1"/>
<dbReference type="EnsemblFungi" id="CAG83746">
    <property type="protein sequence ID" value="CAG83746"/>
    <property type="gene ID" value="YALI0_A06787g"/>
</dbReference>
<dbReference type="KEGG" id="yli:2906116"/>
<dbReference type="VEuPathDB" id="FungiDB:YALI0_A06787g"/>
<dbReference type="HOGENOM" id="CLU_010194_38_0_1"/>
<dbReference type="InParanoid" id="Q6CHP1"/>
<dbReference type="OMA" id="LVAPGMM"/>
<dbReference type="OrthoDB" id="1745at4891"/>
<dbReference type="UniPathway" id="UPA00094"/>
<dbReference type="Proteomes" id="UP000001300">
    <property type="component" value="Chromosome A"/>
</dbReference>
<dbReference type="GO" id="GO:0005783">
    <property type="term" value="C:endoplasmic reticulum"/>
    <property type="evidence" value="ECO:0000318"/>
    <property type="project" value="GO_Central"/>
</dbReference>
<dbReference type="GO" id="GO:0005789">
    <property type="term" value="C:endoplasmic reticulum membrane"/>
    <property type="evidence" value="ECO:0007669"/>
    <property type="project" value="UniProtKB-SubCell"/>
</dbReference>
<dbReference type="GO" id="GO:0045703">
    <property type="term" value="F:ketoreductase activity"/>
    <property type="evidence" value="ECO:0007669"/>
    <property type="project" value="UniProtKB-UniRule"/>
</dbReference>
<dbReference type="GO" id="GO:0141040">
    <property type="term" value="F:very-long-chain 3-oxoacyl-CoA reductase activity"/>
    <property type="evidence" value="ECO:0007669"/>
    <property type="project" value="UniProtKB-EC"/>
</dbReference>
<dbReference type="GO" id="GO:0030497">
    <property type="term" value="P:fatty acid elongation"/>
    <property type="evidence" value="ECO:0000318"/>
    <property type="project" value="GO_Central"/>
</dbReference>
<dbReference type="CDD" id="cd05356">
    <property type="entry name" value="17beta-HSD1_like_SDR_c"/>
    <property type="match status" value="1"/>
</dbReference>
<dbReference type="FunFam" id="3.40.50.720:FF:000317">
    <property type="entry name" value="Very-long-chain 3-oxoacyl-CoA reductase"/>
    <property type="match status" value="1"/>
</dbReference>
<dbReference type="Gene3D" id="3.40.50.720">
    <property type="entry name" value="NAD(P)-binding Rossmann-like Domain"/>
    <property type="match status" value="1"/>
</dbReference>
<dbReference type="HAMAP" id="MF_03107">
    <property type="entry name" value="3_ketoreductase"/>
    <property type="match status" value="1"/>
</dbReference>
<dbReference type="InterPro" id="IPR027533">
    <property type="entry name" value="3_ketoreductase_fungal"/>
</dbReference>
<dbReference type="InterPro" id="IPR036291">
    <property type="entry name" value="NAD(P)-bd_dom_sf"/>
</dbReference>
<dbReference type="InterPro" id="IPR020904">
    <property type="entry name" value="Sc_DH/Rdtase_CS"/>
</dbReference>
<dbReference type="InterPro" id="IPR002347">
    <property type="entry name" value="SDR_fam"/>
</dbReference>
<dbReference type="PANTHER" id="PTHR43086:SF2">
    <property type="entry name" value="HYDROXYSTEROID DEHYDROGENASE-LIKE PROTEIN 1"/>
    <property type="match status" value="1"/>
</dbReference>
<dbReference type="PANTHER" id="PTHR43086">
    <property type="entry name" value="VERY-LONG-CHAIN 3-OXOOACYL-COA REDUCTASE"/>
    <property type="match status" value="1"/>
</dbReference>
<dbReference type="Pfam" id="PF00106">
    <property type="entry name" value="adh_short"/>
    <property type="match status" value="1"/>
</dbReference>
<dbReference type="PIRSF" id="PIRSF000126">
    <property type="entry name" value="11-beta-HSD1"/>
    <property type="match status" value="1"/>
</dbReference>
<dbReference type="PRINTS" id="PR00081">
    <property type="entry name" value="GDHRDH"/>
</dbReference>
<dbReference type="PRINTS" id="PR00080">
    <property type="entry name" value="SDRFAMILY"/>
</dbReference>
<dbReference type="SUPFAM" id="SSF51735">
    <property type="entry name" value="NAD(P)-binding Rossmann-fold domains"/>
    <property type="match status" value="1"/>
</dbReference>
<dbReference type="PROSITE" id="PS00061">
    <property type="entry name" value="ADH_SHORT"/>
    <property type="match status" value="1"/>
</dbReference>
<accession>Q6CHP1</accession>
<comment type="function">
    <text evidence="4">Component of the microsomal membrane bound fatty acid elongation system, which produces the 26-carbon very long-chain fatty acids (VLCFA) from palmitate. Catalyzes the reduction of the 3-ketoacyl-CoA intermediate that is formed in each cycle of fatty acid elongation. VLCFAs serve as precursors for ceramide and sphingolipids.</text>
</comment>
<comment type="catalytic activity">
    <reaction evidence="4">
        <text>a very-long-chain (3R)-3-hydroxyacyl-CoA + NADP(+) = a very-long-chain 3-oxoacyl-CoA + NADPH + H(+)</text>
        <dbReference type="Rhea" id="RHEA:48680"/>
        <dbReference type="ChEBI" id="CHEBI:15378"/>
        <dbReference type="ChEBI" id="CHEBI:57783"/>
        <dbReference type="ChEBI" id="CHEBI:58349"/>
        <dbReference type="ChEBI" id="CHEBI:85440"/>
        <dbReference type="ChEBI" id="CHEBI:90725"/>
        <dbReference type="EC" id="1.1.1.330"/>
    </reaction>
</comment>
<comment type="pathway">
    <text evidence="3">Lipid metabolism; fatty acid biosynthesis.</text>
</comment>
<comment type="subcellular location">
    <subcellularLocation>
        <location evidence="4">Endoplasmic reticulum membrane</location>
        <topology evidence="4">Single-pass membrane protein</topology>
    </subcellularLocation>
</comment>
<comment type="similarity">
    <text evidence="4">Belongs to the short-chain dehydrogenases/reductases (SDR) family.</text>
</comment>
<protein>
    <recommendedName>
        <fullName evidence="4">Very-long-chain 3-oxoacyl-CoA reductase</fullName>
        <ecNumber evidence="4">1.1.1.330</ecNumber>
    </recommendedName>
    <alternativeName>
        <fullName evidence="4">3-ketoacyl-CoA reductase</fullName>
        <shortName evidence="4">3-ketoreductase</shortName>
        <shortName evidence="4">KAR</shortName>
    </alternativeName>
    <alternativeName>
        <fullName evidence="4">Microsomal beta-keto-reductase</fullName>
    </alternativeName>
</protein>
<gene>
    <name type="ordered locus">YALI0A06787g</name>
</gene>
<name>MKAR_YARLI</name>
<feature type="chain" id="PRO_0000357325" description="Very-long-chain 3-oxoacyl-CoA reductase">
    <location>
        <begin position="1"/>
        <end position="389"/>
    </location>
</feature>
<feature type="transmembrane region" description="Helical" evidence="4">
    <location>
        <begin position="34"/>
        <end position="54"/>
    </location>
</feature>
<feature type="region of interest" description="Disordered" evidence="5">
    <location>
        <begin position="359"/>
        <end position="389"/>
    </location>
</feature>
<feature type="active site" description="Proton donor" evidence="2">
    <location>
        <position position="239"/>
    </location>
</feature>
<feature type="active site" description="Lowers pKa of active site Tyr" evidence="2">
    <location>
        <position position="243"/>
    </location>
</feature>
<feature type="binding site" evidence="1">
    <location>
        <position position="80"/>
    </location>
    <ligand>
        <name>NADP(+)</name>
        <dbReference type="ChEBI" id="CHEBI:58349"/>
    </ligand>
</feature>
<feature type="binding site" evidence="1">
    <location>
        <position position="134"/>
    </location>
    <ligand>
        <name>NADP(+)</name>
        <dbReference type="ChEBI" id="CHEBI:58349"/>
    </ligand>
</feature>
<feature type="binding site" evidence="2">
    <location>
        <position position="162"/>
    </location>
    <ligand>
        <name>NADP(+)</name>
        <dbReference type="ChEBI" id="CHEBI:58349"/>
    </ligand>
</feature>
<feature type="binding site" evidence="2">
    <location>
        <position position="239"/>
    </location>
    <ligand>
        <name>NADP(+)</name>
        <dbReference type="ChEBI" id="CHEBI:58349"/>
    </ligand>
</feature>
<feature type="binding site" evidence="2">
    <location>
        <position position="243"/>
    </location>
    <ligand>
        <name>NADP(+)</name>
        <dbReference type="ChEBI" id="CHEBI:58349"/>
    </ligand>
</feature>
<feature type="binding site" evidence="2">
    <location>
        <position position="272"/>
    </location>
    <ligand>
        <name>NADP(+)</name>
        <dbReference type="ChEBI" id="CHEBI:58349"/>
    </ligand>
</feature>
<feature type="binding site" evidence="1">
    <location>
        <position position="274"/>
    </location>
    <ligand>
        <name>NADP(+)</name>
        <dbReference type="ChEBI" id="CHEBI:58349"/>
    </ligand>
</feature>
<keyword id="KW-0256">Endoplasmic reticulum</keyword>
<keyword id="KW-0275">Fatty acid biosynthesis</keyword>
<keyword id="KW-0276">Fatty acid metabolism</keyword>
<keyword id="KW-0444">Lipid biosynthesis</keyword>
<keyword id="KW-0443">Lipid metabolism</keyword>
<keyword id="KW-0472">Membrane</keyword>
<keyword id="KW-0521">NADP</keyword>
<keyword id="KW-0560">Oxidoreductase</keyword>
<keyword id="KW-1185">Reference proteome</keyword>
<keyword id="KW-0812">Transmembrane</keyword>
<keyword id="KW-1133">Transmembrane helix</keyword>
<organism>
    <name type="scientific">Yarrowia lipolytica (strain CLIB 122 / E 150)</name>
    <name type="common">Yeast</name>
    <name type="synonym">Candida lipolytica</name>
    <dbReference type="NCBI Taxonomy" id="284591"/>
    <lineage>
        <taxon>Eukaryota</taxon>
        <taxon>Fungi</taxon>
        <taxon>Dikarya</taxon>
        <taxon>Ascomycota</taxon>
        <taxon>Saccharomycotina</taxon>
        <taxon>Dipodascomycetes</taxon>
        <taxon>Dipodascales</taxon>
        <taxon>Dipodascales incertae sedis</taxon>
        <taxon>Yarrowia</taxon>
    </lineage>
</organism>
<reference key="1">
    <citation type="journal article" date="2004" name="Nature">
        <title>Genome evolution in yeasts.</title>
        <authorList>
            <person name="Dujon B."/>
            <person name="Sherman D."/>
            <person name="Fischer G."/>
            <person name="Durrens P."/>
            <person name="Casaregola S."/>
            <person name="Lafontaine I."/>
            <person name="de Montigny J."/>
            <person name="Marck C."/>
            <person name="Neuveglise C."/>
            <person name="Talla E."/>
            <person name="Goffard N."/>
            <person name="Frangeul L."/>
            <person name="Aigle M."/>
            <person name="Anthouard V."/>
            <person name="Babour A."/>
            <person name="Barbe V."/>
            <person name="Barnay S."/>
            <person name="Blanchin S."/>
            <person name="Beckerich J.-M."/>
            <person name="Beyne E."/>
            <person name="Bleykasten C."/>
            <person name="Boisrame A."/>
            <person name="Boyer J."/>
            <person name="Cattolico L."/>
            <person name="Confanioleri F."/>
            <person name="de Daruvar A."/>
            <person name="Despons L."/>
            <person name="Fabre E."/>
            <person name="Fairhead C."/>
            <person name="Ferry-Dumazet H."/>
            <person name="Groppi A."/>
            <person name="Hantraye F."/>
            <person name="Hennequin C."/>
            <person name="Jauniaux N."/>
            <person name="Joyet P."/>
            <person name="Kachouri R."/>
            <person name="Kerrest A."/>
            <person name="Koszul R."/>
            <person name="Lemaire M."/>
            <person name="Lesur I."/>
            <person name="Ma L."/>
            <person name="Muller H."/>
            <person name="Nicaud J.-M."/>
            <person name="Nikolski M."/>
            <person name="Oztas S."/>
            <person name="Ozier-Kalogeropoulos O."/>
            <person name="Pellenz S."/>
            <person name="Potier S."/>
            <person name="Richard G.-F."/>
            <person name="Straub M.-L."/>
            <person name="Suleau A."/>
            <person name="Swennen D."/>
            <person name="Tekaia F."/>
            <person name="Wesolowski-Louvel M."/>
            <person name="Westhof E."/>
            <person name="Wirth B."/>
            <person name="Zeniou-Meyer M."/>
            <person name="Zivanovic Y."/>
            <person name="Bolotin-Fukuhara M."/>
            <person name="Thierry A."/>
            <person name="Bouchier C."/>
            <person name="Caudron B."/>
            <person name="Scarpelli C."/>
            <person name="Gaillardin C."/>
            <person name="Weissenbach J."/>
            <person name="Wincker P."/>
            <person name="Souciet J.-L."/>
        </authorList>
    </citation>
    <scope>NUCLEOTIDE SEQUENCE [LARGE SCALE GENOMIC DNA]</scope>
    <source>
        <strain>CLIB 122 / E 150</strain>
    </source>
</reference>
<proteinExistence type="inferred from homology"/>
<sequence>MVYVNAKNYFCDSIINNTDRVLSALIKYHGLSIIAVFLLAIGLFHVALKVVSYVAVLLDVFVLPPTNYLPYGSQRGAWAVVTGASDGIGKEYARQLGLRGFNVFLISRTESKLRELAQEIAEKSKVETKFLAIDVSTDSPQNYKDIETVLETIPSVSILINNVGLSHSIPTPFLETPPAELHNIIAINNLATLKITQLIAPKIVESVKEARATKKFQKGLILTMGSFGGLLPTPLLATYSGSKAFLQHWSNALAVELAPEHVDVELVVSYLVTSAMSKVRKTSALIPNPKQFVTATLSSVGRAGGAQEKFATSTPYWSHALLHWWIAQTVGVFSKLVAGFNYKMHVDIRKRALKKQARQAAGGVADPKNTTAAREGYATESLKNETLKH</sequence>
<evidence type="ECO:0000250" key="1">
    <source>
        <dbReference type="UniProtKB" id="L0E2Z4"/>
    </source>
</evidence>
<evidence type="ECO:0000250" key="2">
    <source>
        <dbReference type="UniProtKB" id="O93868"/>
    </source>
</evidence>
<evidence type="ECO:0000250" key="3">
    <source>
        <dbReference type="UniProtKB" id="P38286"/>
    </source>
</evidence>
<evidence type="ECO:0000255" key="4">
    <source>
        <dbReference type="HAMAP-Rule" id="MF_03107"/>
    </source>
</evidence>
<evidence type="ECO:0000256" key="5">
    <source>
        <dbReference type="SAM" id="MobiDB-lite"/>
    </source>
</evidence>